<gene>
    <name evidence="1" type="primary">rplQ</name>
    <name type="ordered locus">Shew185_0222</name>
</gene>
<evidence type="ECO:0000255" key="1">
    <source>
        <dbReference type="HAMAP-Rule" id="MF_01368"/>
    </source>
</evidence>
<evidence type="ECO:0000305" key="2"/>
<feature type="chain" id="PRO_1000055938" description="Large ribosomal subunit protein bL17">
    <location>
        <begin position="1"/>
        <end position="131"/>
    </location>
</feature>
<proteinExistence type="inferred from homology"/>
<organism>
    <name type="scientific">Shewanella baltica (strain OS185)</name>
    <dbReference type="NCBI Taxonomy" id="402882"/>
    <lineage>
        <taxon>Bacteria</taxon>
        <taxon>Pseudomonadati</taxon>
        <taxon>Pseudomonadota</taxon>
        <taxon>Gammaproteobacteria</taxon>
        <taxon>Alteromonadales</taxon>
        <taxon>Shewanellaceae</taxon>
        <taxon>Shewanella</taxon>
    </lineage>
</organism>
<accession>A6WHV4</accession>
<comment type="subunit">
    <text evidence="1">Part of the 50S ribosomal subunit. Contacts protein L32.</text>
</comment>
<comment type="similarity">
    <text evidence="1">Belongs to the bacterial ribosomal protein bL17 family.</text>
</comment>
<sequence>MRHRKSGRQLNRNSSHRQAMFRNMAGSLVRHEIIKTTVAKAKELRRVVEPLITLAKSDSVANRRLAFARTRDAEVVGKLFTELGPRYQERPGGYTRILKCGLRAGDKAPMAYIELVGRPEAAQAVDVEAAE</sequence>
<dbReference type="EMBL" id="CP000753">
    <property type="protein sequence ID" value="ABS06393.1"/>
    <property type="molecule type" value="Genomic_DNA"/>
</dbReference>
<dbReference type="RefSeq" id="WP_006083573.1">
    <property type="nucleotide sequence ID" value="NC_009665.1"/>
</dbReference>
<dbReference type="SMR" id="A6WHV4"/>
<dbReference type="GeneID" id="11770581"/>
<dbReference type="KEGG" id="sbm:Shew185_0222"/>
<dbReference type="HOGENOM" id="CLU_074407_2_0_6"/>
<dbReference type="GO" id="GO:0022625">
    <property type="term" value="C:cytosolic large ribosomal subunit"/>
    <property type="evidence" value="ECO:0007669"/>
    <property type="project" value="TreeGrafter"/>
</dbReference>
<dbReference type="GO" id="GO:0003735">
    <property type="term" value="F:structural constituent of ribosome"/>
    <property type="evidence" value="ECO:0007669"/>
    <property type="project" value="InterPro"/>
</dbReference>
<dbReference type="GO" id="GO:0006412">
    <property type="term" value="P:translation"/>
    <property type="evidence" value="ECO:0007669"/>
    <property type="project" value="UniProtKB-UniRule"/>
</dbReference>
<dbReference type="FunFam" id="3.90.1030.10:FF:000001">
    <property type="entry name" value="50S ribosomal protein L17"/>
    <property type="match status" value="1"/>
</dbReference>
<dbReference type="Gene3D" id="3.90.1030.10">
    <property type="entry name" value="Ribosomal protein L17"/>
    <property type="match status" value="1"/>
</dbReference>
<dbReference type="HAMAP" id="MF_01368">
    <property type="entry name" value="Ribosomal_bL17"/>
    <property type="match status" value="1"/>
</dbReference>
<dbReference type="InterPro" id="IPR000456">
    <property type="entry name" value="Ribosomal_bL17"/>
</dbReference>
<dbReference type="InterPro" id="IPR047859">
    <property type="entry name" value="Ribosomal_bL17_CS"/>
</dbReference>
<dbReference type="InterPro" id="IPR036373">
    <property type="entry name" value="Ribosomal_bL17_sf"/>
</dbReference>
<dbReference type="NCBIfam" id="TIGR00059">
    <property type="entry name" value="L17"/>
    <property type="match status" value="1"/>
</dbReference>
<dbReference type="PANTHER" id="PTHR14413:SF16">
    <property type="entry name" value="LARGE RIBOSOMAL SUBUNIT PROTEIN BL17M"/>
    <property type="match status" value="1"/>
</dbReference>
<dbReference type="PANTHER" id="PTHR14413">
    <property type="entry name" value="RIBOSOMAL PROTEIN L17"/>
    <property type="match status" value="1"/>
</dbReference>
<dbReference type="Pfam" id="PF01196">
    <property type="entry name" value="Ribosomal_L17"/>
    <property type="match status" value="1"/>
</dbReference>
<dbReference type="SUPFAM" id="SSF64263">
    <property type="entry name" value="Prokaryotic ribosomal protein L17"/>
    <property type="match status" value="1"/>
</dbReference>
<dbReference type="PROSITE" id="PS01167">
    <property type="entry name" value="RIBOSOMAL_L17"/>
    <property type="match status" value="1"/>
</dbReference>
<protein>
    <recommendedName>
        <fullName evidence="1">Large ribosomal subunit protein bL17</fullName>
    </recommendedName>
    <alternativeName>
        <fullName evidence="2">50S ribosomal protein L17</fullName>
    </alternativeName>
</protein>
<name>RL17_SHEB8</name>
<reference key="1">
    <citation type="submission" date="2007-07" db="EMBL/GenBank/DDBJ databases">
        <title>Complete sequence of chromosome of Shewanella baltica OS185.</title>
        <authorList>
            <consortium name="US DOE Joint Genome Institute"/>
            <person name="Copeland A."/>
            <person name="Lucas S."/>
            <person name="Lapidus A."/>
            <person name="Barry K."/>
            <person name="Glavina del Rio T."/>
            <person name="Dalin E."/>
            <person name="Tice H."/>
            <person name="Pitluck S."/>
            <person name="Sims D."/>
            <person name="Brettin T."/>
            <person name="Bruce D."/>
            <person name="Detter J.C."/>
            <person name="Han C."/>
            <person name="Schmutz J."/>
            <person name="Larimer F."/>
            <person name="Land M."/>
            <person name="Hauser L."/>
            <person name="Kyrpides N."/>
            <person name="Mikhailova N."/>
            <person name="Brettar I."/>
            <person name="Rodrigues J."/>
            <person name="Konstantinidis K."/>
            <person name="Tiedje J."/>
            <person name="Richardson P."/>
        </authorList>
    </citation>
    <scope>NUCLEOTIDE SEQUENCE [LARGE SCALE GENOMIC DNA]</scope>
    <source>
        <strain>OS185</strain>
    </source>
</reference>
<keyword id="KW-0687">Ribonucleoprotein</keyword>
<keyword id="KW-0689">Ribosomal protein</keyword>